<geneLocation type="plasmid">
    <name>pAA1</name>
</geneLocation>
<geneLocation type="plasmid">
    <name>pTC1</name>
</geneLocation>
<comment type="function">
    <text evidence="1">Catalyzes the transfer of the diacylglyceryl group from phosphatidylglycerol to the sulfhydryl group of the N-terminal cysteine of a prolipoprotein, the first step in the formation of mature lipoproteins.</text>
</comment>
<comment type="catalytic activity">
    <reaction evidence="1">
        <text>L-cysteinyl-[prolipoprotein] + a 1,2-diacyl-sn-glycero-3-phospho-(1'-sn-glycerol) = an S-1,2-diacyl-sn-glyceryl-L-cysteinyl-[prolipoprotein] + sn-glycerol 1-phosphate + H(+)</text>
        <dbReference type="Rhea" id="RHEA:56712"/>
        <dbReference type="Rhea" id="RHEA-COMP:14679"/>
        <dbReference type="Rhea" id="RHEA-COMP:14680"/>
        <dbReference type="ChEBI" id="CHEBI:15378"/>
        <dbReference type="ChEBI" id="CHEBI:29950"/>
        <dbReference type="ChEBI" id="CHEBI:57685"/>
        <dbReference type="ChEBI" id="CHEBI:64716"/>
        <dbReference type="ChEBI" id="CHEBI:140658"/>
        <dbReference type="EC" id="2.5.1.145"/>
    </reaction>
</comment>
<comment type="pathway">
    <text evidence="1">Protein modification; lipoprotein biosynthesis (diacylglyceryl transfer).</text>
</comment>
<comment type="subcellular location">
    <subcellularLocation>
        <location evidence="1">Cell membrane</location>
        <topology evidence="1">Multi-pass membrane protein</topology>
    </subcellularLocation>
</comment>
<comment type="similarity">
    <text evidence="1">Belongs to the Lgt family.</text>
</comment>
<dbReference type="EC" id="2.5.1.145" evidence="1"/>
<dbReference type="EMBL" id="AY456696">
    <property type="protein sequence ID" value="AAS20034.1"/>
    <property type="molecule type" value="Genomic_DNA"/>
</dbReference>
<dbReference type="EMBL" id="CP000475">
    <property type="protein sequence ID" value="ABM10364.1"/>
    <property type="molecule type" value="Genomic_DNA"/>
</dbReference>
<dbReference type="RefSeq" id="WP_011777005.1">
    <property type="nucleotide sequence ID" value="NC_008712.1"/>
</dbReference>
<dbReference type="SMR" id="P60966"/>
<dbReference type="KEGG" id="aau:AAur_pTC10226"/>
<dbReference type="HOGENOM" id="CLU_013386_2_0_11"/>
<dbReference type="OrthoDB" id="871140at2"/>
<dbReference type="UniPathway" id="UPA00664"/>
<dbReference type="Proteomes" id="UP000000637">
    <property type="component" value="Plasmid pTC1"/>
</dbReference>
<dbReference type="GO" id="GO:0005886">
    <property type="term" value="C:plasma membrane"/>
    <property type="evidence" value="ECO:0007669"/>
    <property type="project" value="UniProtKB-SubCell"/>
</dbReference>
<dbReference type="GO" id="GO:0008961">
    <property type="term" value="F:phosphatidylglycerol-prolipoprotein diacylglyceryl transferase activity"/>
    <property type="evidence" value="ECO:0007669"/>
    <property type="project" value="UniProtKB-UniRule"/>
</dbReference>
<dbReference type="GO" id="GO:0042158">
    <property type="term" value="P:lipoprotein biosynthetic process"/>
    <property type="evidence" value="ECO:0007669"/>
    <property type="project" value="UniProtKB-UniRule"/>
</dbReference>
<dbReference type="HAMAP" id="MF_01147">
    <property type="entry name" value="Lgt"/>
    <property type="match status" value="1"/>
</dbReference>
<dbReference type="InterPro" id="IPR001640">
    <property type="entry name" value="Lgt"/>
</dbReference>
<dbReference type="NCBIfam" id="TIGR00544">
    <property type="entry name" value="lgt"/>
    <property type="match status" value="1"/>
</dbReference>
<dbReference type="PANTHER" id="PTHR30589:SF0">
    <property type="entry name" value="PHOSPHATIDYLGLYCEROL--PROLIPOPROTEIN DIACYLGLYCERYL TRANSFERASE"/>
    <property type="match status" value="1"/>
</dbReference>
<dbReference type="PANTHER" id="PTHR30589">
    <property type="entry name" value="PROLIPOPROTEIN DIACYLGLYCERYL TRANSFERASE"/>
    <property type="match status" value="1"/>
</dbReference>
<dbReference type="Pfam" id="PF01790">
    <property type="entry name" value="LGT"/>
    <property type="match status" value="1"/>
</dbReference>
<dbReference type="PROSITE" id="PS01311">
    <property type="entry name" value="LGT"/>
    <property type="match status" value="1"/>
</dbReference>
<evidence type="ECO:0000255" key="1">
    <source>
        <dbReference type="HAMAP-Rule" id="MF_01147"/>
    </source>
</evidence>
<evidence type="ECO:0000256" key="2">
    <source>
        <dbReference type="SAM" id="MobiDB-lite"/>
    </source>
</evidence>
<organism>
    <name type="scientific">Paenarthrobacter aurescens (strain TC1)</name>
    <dbReference type="NCBI Taxonomy" id="290340"/>
    <lineage>
        <taxon>Bacteria</taxon>
        <taxon>Bacillati</taxon>
        <taxon>Actinomycetota</taxon>
        <taxon>Actinomycetes</taxon>
        <taxon>Micrococcales</taxon>
        <taxon>Micrococcaceae</taxon>
        <taxon>Paenarthrobacter</taxon>
    </lineage>
</organism>
<gene>
    <name evidence="1" type="primary">lgt</name>
    <name type="ordered locus">AAur_pTC10226</name>
</gene>
<accession>P60966</accession>
<accession>A1RCY3</accession>
<proteinExistence type="inferred from homology"/>
<reference key="1">
    <citation type="submission" date="2003-11" db="EMBL/GenBank/DDBJ databases">
        <title>Sequence and analysis of a 161 kb atrazine catabolic gene region in Arthrobacter aurescens strain TC1 reveals its plasmid origin.</title>
        <authorList>
            <person name="Sajjaphan K."/>
            <person name="Wackett L.P."/>
            <person name="Palmer M."/>
            <person name="Blackmon B."/>
            <person name="Tomkins J."/>
            <person name="Sadowsky M.J."/>
        </authorList>
    </citation>
    <scope>NUCLEOTIDE SEQUENCE [GENOMIC DNA]</scope>
    <source>
        <plasmid>pAA1</plasmid>
    </source>
</reference>
<reference key="2">
    <citation type="journal article" date="2006" name="PLoS Genet.">
        <title>Secrets of soil survival revealed by the genome sequence of Arthrobacter aurescens TC1.</title>
        <authorList>
            <person name="Mongodin E.F."/>
            <person name="Shapir N."/>
            <person name="Daugherty S.C."/>
            <person name="DeBoy R.T."/>
            <person name="Emerson J.B."/>
            <person name="Shvartzbeyn A."/>
            <person name="Radune D."/>
            <person name="Vamathevan J."/>
            <person name="Riggs F."/>
            <person name="Grinberg V."/>
            <person name="Khouri H.M."/>
            <person name="Wackett L.P."/>
            <person name="Nelson K.E."/>
            <person name="Sadowsky M.J."/>
        </authorList>
    </citation>
    <scope>NUCLEOTIDE SEQUENCE [LARGE SCALE GENOMIC DNA]</scope>
    <source>
        <strain>TC1</strain>
        <plasmid>pTC1</plasmid>
    </source>
</reference>
<keyword id="KW-1003">Cell membrane</keyword>
<keyword id="KW-0472">Membrane</keyword>
<keyword id="KW-0614">Plasmid</keyword>
<keyword id="KW-0808">Transferase</keyword>
<keyword id="KW-0812">Transmembrane</keyword>
<keyword id="KW-1133">Transmembrane helix</keyword>
<sequence>MQPLVLPGFFIPSPTVSAVEIGPLTIRFYALCILAGIVIGAWLTARRFRARGGTTAQAMDIIMWAVPFGIVGGRLYHVITDNQLYFGPGKDPWGAFRIWEGGLGIWGAVAVGLAGAAIGARRTGVRLATFADAAAPGLLLAQAMGRWGNWFNNELYGEPTNLPWKLQIHNMNPATGQAVLTADGTPETLGYFQPTFLYESLWCLAAAALLVFLDRRYKLGAGSVFALYVVLYTAGRFIFELMRSDYANTILGLRVNTWVSALLFLAALAVFLILRSRPRSASTAQSACSIDGFDTRANGHDPEKHDETDGKGNRHHVP</sequence>
<name>LGT_PAEAT</name>
<protein>
    <recommendedName>
        <fullName evidence="1">Phosphatidylglycerol--prolipoprotein diacylglyceryl transferase</fullName>
        <ecNumber evidence="1">2.5.1.145</ecNumber>
    </recommendedName>
</protein>
<feature type="chain" id="PRO_0000172543" description="Phosphatidylglycerol--prolipoprotein diacylglyceryl transferase">
    <location>
        <begin position="1"/>
        <end position="318"/>
    </location>
</feature>
<feature type="transmembrane region" description="Helical" evidence="1">
    <location>
        <begin position="23"/>
        <end position="43"/>
    </location>
</feature>
<feature type="transmembrane region" description="Helical" evidence="1">
    <location>
        <begin position="59"/>
        <end position="79"/>
    </location>
</feature>
<feature type="transmembrane region" description="Helical" evidence="1">
    <location>
        <begin position="98"/>
        <end position="118"/>
    </location>
</feature>
<feature type="transmembrane region" description="Helical" evidence="1">
    <location>
        <begin position="124"/>
        <end position="146"/>
    </location>
</feature>
<feature type="transmembrane region" description="Helical" evidence="1">
    <location>
        <begin position="192"/>
        <end position="212"/>
    </location>
</feature>
<feature type="transmembrane region" description="Helical" evidence="1">
    <location>
        <begin position="219"/>
        <end position="239"/>
    </location>
</feature>
<feature type="transmembrane region" description="Helical" evidence="1">
    <location>
        <begin position="253"/>
        <end position="273"/>
    </location>
</feature>
<feature type="region of interest" description="Disordered" evidence="2">
    <location>
        <begin position="293"/>
        <end position="318"/>
    </location>
</feature>
<feature type="compositionally biased region" description="Basic and acidic residues" evidence="2">
    <location>
        <begin position="293"/>
        <end position="312"/>
    </location>
</feature>
<feature type="binding site" evidence="1">
    <location>
        <position position="146"/>
    </location>
    <ligand>
        <name>a 1,2-diacyl-sn-glycero-3-phospho-(1'-sn-glycerol)</name>
        <dbReference type="ChEBI" id="CHEBI:64716"/>
    </ligand>
</feature>